<accession>Q5WWX2</accession>
<name>RLMH_LEGPL</name>
<reference key="1">
    <citation type="journal article" date="2004" name="Nat. Genet.">
        <title>Evidence in the Legionella pneumophila genome for exploitation of host cell functions and high genome plasticity.</title>
        <authorList>
            <person name="Cazalet C."/>
            <person name="Rusniok C."/>
            <person name="Brueggemann H."/>
            <person name="Zidane N."/>
            <person name="Magnier A."/>
            <person name="Ma L."/>
            <person name="Tichit M."/>
            <person name="Jarraud S."/>
            <person name="Bouchier C."/>
            <person name="Vandenesch F."/>
            <person name="Kunst F."/>
            <person name="Etienne J."/>
            <person name="Glaser P."/>
            <person name="Buchrieser C."/>
        </authorList>
    </citation>
    <scope>NUCLEOTIDE SEQUENCE [LARGE SCALE GENOMIC DNA]</scope>
    <source>
        <strain>Lens</strain>
    </source>
</reference>
<sequence length="156" mass="17681">MLKITIITLGNKMPDWVNSGVNEYAKRFHDGIQIKLIEIPLLRRNKSSDLARILEKESALTKDALPANARLIALDMLGKSFSSEELALKLTQLQQISSHLCFIIGGPEGLSNEILTLCDERWSLSKLTLPHPLVRIILLESLYRAWSIINNHPYHK</sequence>
<dbReference type="EC" id="2.1.1.177" evidence="1"/>
<dbReference type="EMBL" id="CR628337">
    <property type="protein sequence ID" value="CAH15567.1"/>
    <property type="molecule type" value="Genomic_DNA"/>
</dbReference>
<dbReference type="RefSeq" id="WP_011215397.1">
    <property type="nucleotide sequence ID" value="NC_006369.1"/>
</dbReference>
<dbReference type="SMR" id="Q5WWX2"/>
<dbReference type="KEGG" id="lpf:lpl1327"/>
<dbReference type="LegioList" id="lpl1327"/>
<dbReference type="HOGENOM" id="CLU_100552_1_0_6"/>
<dbReference type="Proteomes" id="UP000002517">
    <property type="component" value="Chromosome"/>
</dbReference>
<dbReference type="GO" id="GO:0005737">
    <property type="term" value="C:cytoplasm"/>
    <property type="evidence" value="ECO:0007669"/>
    <property type="project" value="UniProtKB-SubCell"/>
</dbReference>
<dbReference type="GO" id="GO:0070038">
    <property type="term" value="F:rRNA (pseudouridine-N3-)-methyltransferase activity"/>
    <property type="evidence" value="ECO:0007669"/>
    <property type="project" value="UniProtKB-UniRule"/>
</dbReference>
<dbReference type="CDD" id="cd18081">
    <property type="entry name" value="RlmH-like"/>
    <property type="match status" value="1"/>
</dbReference>
<dbReference type="Gene3D" id="3.40.1280.10">
    <property type="match status" value="1"/>
</dbReference>
<dbReference type="HAMAP" id="MF_00658">
    <property type="entry name" value="23SrRNA_methyltr_H"/>
    <property type="match status" value="1"/>
</dbReference>
<dbReference type="InterPro" id="IPR029028">
    <property type="entry name" value="Alpha/beta_knot_MTases"/>
</dbReference>
<dbReference type="InterPro" id="IPR003742">
    <property type="entry name" value="RlmH-like"/>
</dbReference>
<dbReference type="InterPro" id="IPR029026">
    <property type="entry name" value="tRNA_m1G_MTases_N"/>
</dbReference>
<dbReference type="NCBIfam" id="NF000986">
    <property type="entry name" value="PRK00103.1-4"/>
    <property type="match status" value="1"/>
</dbReference>
<dbReference type="NCBIfam" id="TIGR00246">
    <property type="entry name" value="tRNA_RlmH_YbeA"/>
    <property type="match status" value="1"/>
</dbReference>
<dbReference type="PANTHER" id="PTHR33603">
    <property type="entry name" value="METHYLTRANSFERASE"/>
    <property type="match status" value="1"/>
</dbReference>
<dbReference type="PANTHER" id="PTHR33603:SF1">
    <property type="entry name" value="RIBOSOMAL RNA LARGE SUBUNIT METHYLTRANSFERASE H"/>
    <property type="match status" value="1"/>
</dbReference>
<dbReference type="Pfam" id="PF02590">
    <property type="entry name" value="SPOUT_MTase"/>
    <property type="match status" value="1"/>
</dbReference>
<dbReference type="PIRSF" id="PIRSF004505">
    <property type="entry name" value="MT_bac"/>
    <property type="match status" value="1"/>
</dbReference>
<dbReference type="SUPFAM" id="SSF75217">
    <property type="entry name" value="alpha/beta knot"/>
    <property type="match status" value="1"/>
</dbReference>
<keyword id="KW-0963">Cytoplasm</keyword>
<keyword id="KW-0489">Methyltransferase</keyword>
<keyword id="KW-0698">rRNA processing</keyword>
<keyword id="KW-0949">S-adenosyl-L-methionine</keyword>
<keyword id="KW-0808">Transferase</keyword>
<evidence type="ECO:0000255" key="1">
    <source>
        <dbReference type="HAMAP-Rule" id="MF_00658"/>
    </source>
</evidence>
<protein>
    <recommendedName>
        <fullName evidence="1">Ribosomal RNA large subunit methyltransferase H</fullName>
        <ecNumber evidence="1">2.1.1.177</ecNumber>
    </recommendedName>
    <alternativeName>
        <fullName evidence="1">23S rRNA (pseudouridine1915-N3)-methyltransferase</fullName>
    </alternativeName>
    <alternativeName>
        <fullName evidence="1">23S rRNA m3Psi1915 methyltransferase</fullName>
    </alternativeName>
    <alternativeName>
        <fullName evidence="1">rRNA (pseudouridine-N3-)-methyltransferase RlmH</fullName>
    </alternativeName>
</protein>
<organism>
    <name type="scientific">Legionella pneumophila (strain Lens)</name>
    <dbReference type="NCBI Taxonomy" id="297245"/>
    <lineage>
        <taxon>Bacteria</taxon>
        <taxon>Pseudomonadati</taxon>
        <taxon>Pseudomonadota</taxon>
        <taxon>Gammaproteobacteria</taxon>
        <taxon>Legionellales</taxon>
        <taxon>Legionellaceae</taxon>
        <taxon>Legionella</taxon>
    </lineage>
</organism>
<proteinExistence type="inferred from homology"/>
<gene>
    <name evidence="1" type="primary">rlmH</name>
    <name type="ordered locus">lpl1327</name>
</gene>
<comment type="function">
    <text evidence="1">Specifically methylates the pseudouridine at position 1915 (m3Psi1915) in 23S rRNA.</text>
</comment>
<comment type="catalytic activity">
    <reaction evidence="1">
        <text>pseudouridine(1915) in 23S rRNA + S-adenosyl-L-methionine = N(3)-methylpseudouridine(1915) in 23S rRNA + S-adenosyl-L-homocysteine + H(+)</text>
        <dbReference type="Rhea" id="RHEA:42752"/>
        <dbReference type="Rhea" id="RHEA-COMP:10221"/>
        <dbReference type="Rhea" id="RHEA-COMP:10222"/>
        <dbReference type="ChEBI" id="CHEBI:15378"/>
        <dbReference type="ChEBI" id="CHEBI:57856"/>
        <dbReference type="ChEBI" id="CHEBI:59789"/>
        <dbReference type="ChEBI" id="CHEBI:65314"/>
        <dbReference type="ChEBI" id="CHEBI:74486"/>
        <dbReference type="EC" id="2.1.1.177"/>
    </reaction>
</comment>
<comment type="subunit">
    <text evidence="1">Homodimer.</text>
</comment>
<comment type="subcellular location">
    <subcellularLocation>
        <location evidence="1">Cytoplasm</location>
    </subcellularLocation>
</comment>
<comment type="similarity">
    <text evidence="1">Belongs to the RNA methyltransferase RlmH family.</text>
</comment>
<feature type="chain" id="PRO_0000198137" description="Ribosomal RNA large subunit methyltransferase H">
    <location>
        <begin position="1"/>
        <end position="156"/>
    </location>
</feature>
<feature type="binding site" evidence="1">
    <location>
        <position position="74"/>
    </location>
    <ligand>
        <name>S-adenosyl-L-methionine</name>
        <dbReference type="ChEBI" id="CHEBI:59789"/>
    </ligand>
</feature>
<feature type="binding site" evidence="1">
    <location>
        <position position="105"/>
    </location>
    <ligand>
        <name>S-adenosyl-L-methionine</name>
        <dbReference type="ChEBI" id="CHEBI:59789"/>
    </ligand>
</feature>
<feature type="binding site" evidence="1">
    <location>
        <begin position="124"/>
        <end position="129"/>
    </location>
    <ligand>
        <name>S-adenosyl-L-methionine</name>
        <dbReference type="ChEBI" id="CHEBI:59789"/>
    </ligand>
</feature>